<proteinExistence type="inferred from homology"/>
<dbReference type="EMBL" id="CP000931">
    <property type="protein sequence ID" value="ABZ74606.1"/>
    <property type="molecule type" value="Genomic_DNA"/>
</dbReference>
<dbReference type="RefSeq" id="WP_012275164.1">
    <property type="nucleotide sequence ID" value="NC_010334.1"/>
</dbReference>
<dbReference type="SMR" id="B0TLD3"/>
<dbReference type="STRING" id="458817.Shal_0030"/>
<dbReference type="KEGG" id="shl:Shal_0030"/>
<dbReference type="eggNOG" id="COG2922">
    <property type="taxonomic scope" value="Bacteria"/>
</dbReference>
<dbReference type="HOGENOM" id="CLU_133242_0_0_6"/>
<dbReference type="OrthoDB" id="9788984at2"/>
<dbReference type="Proteomes" id="UP000001317">
    <property type="component" value="Chromosome"/>
</dbReference>
<dbReference type="HAMAP" id="MF_00598">
    <property type="entry name" value="Smg"/>
    <property type="match status" value="1"/>
</dbReference>
<dbReference type="InterPro" id="IPR007456">
    <property type="entry name" value="Smg"/>
</dbReference>
<dbReference type="NCBIfam" id="NF002897">
    <property type="entry name" value="PRK03430.1"/>
    <property type="match status" value="1"/>
</dbReference>
<dbReference type="PANTHER" id="PTHR38692">
    <property type="entry name" value="PROTEIN SMG"/>
    <property type="match status" value="1"/>
</dbReference>
<dbReference type="PANTHER" id="PTHR38692:SF1">
    <property type="entry name" value="PROTEIN SMG"/>
    <property type="match status" value="1"/>
</dbReference>
<dbReference type="Pfam" id="PF04361">
    <property type="entry name" value="DUF494"/>
    <property type="match status" value="1"/>
</dbReference>
<organism>
    <name type="scientific">Shewanella halifaxensis (strain HAW-EB4)</name>
    <dbReference type="NCBI Taxonomy" id="458817"/>
    <lineage>
        <taxon>Bacteria</taxon>
        <taxon>Pseudomonadati</taxon>
        <taxon>Pseudomonadota</taxon>
        <taxon>Gammaproteobacteria</taxon>
        <taxon>Alteromonadales</taxon>
        <taxon>Shewanellaceae</taxon>
        <taxon>Shewanella</taxon>
    </lineage>
</organism>
<feature type="chain" id="PRO_1000082450" description="Protein Smg homolog">
    <location>
        <begin position="1"/>
        <end position="157"/>
    </location>
</feature>
<protein>
    <recommendedName>
        <fullName evidence="1">Protein Smg homolog</fullName>
    </recommendedName>
</protein>
<evidence type="ECO:0000255" key="1">
    <source>
        <dbReference type="HAMAP-Rule" id="MF_00598"/>
    </source>
</evidence>
<reference key="1">
    <citation type="submission" date="2008-01" db="EMBL/GenBank/DDBJ databases">
        <title>Complete sequence of Shewanella halifaxensis HAW-EB4.</title>
        <authorList>
            <consortium name="US DOE Joint Genome Institute"/>
            <person name="Copeland A."/>
            <person name="Lucas S."/>
            <person name="Lapidus A."/>
            <person name="Glavina del Rio T."/>
            <person name="Dalin E."/>
            <person name="Tice H."/>
            <person name="Bruce D."/>
            <person name="Goodwin L."/>
            <person name="Pitluck S."/>
            <person name="Sims D."/>
            <person name="Brettin T."/>
            <person name="Detter J.C."/>
            <person name="Han C."/>
            <person name="Kuske C.R."/>
            <person name="Schmutz J."/>
            <person name="Larimer F."/>
            <person name="Land M."/>
            <person name="Hauser L."/>
            <person name="Kyrpides N."/>
            <person name="Kim E."/>
            <person name="Zhao J.-S."/>
            <person name="Richardson P."/>
        </authorList>
    </citation>
    <scope>NUCLEOTIDE SEQUENCE [LARGE SCALE GENOMIC DNA]</scope>
    <source>
        <strain>HAW-EB4</strain>
    </source>
</reference>
<comment type="similarity">
    <text evidence="1">Belongs to the Smg family.</text>
</comment>
<gene>
    <name evidence="1" type="primary">smg</name>
    <name type="ordered locus">Shal_0030</name>
</gene>
<sequence>MFDILMYLFENYVHSEVELLVDQDELTKELTRAGFHQSEIIKALSWLERLADIQEAGTPYLCNHDQQSFRIYTKAEMEKIDVESRGFLLFLEQIKVLSVETREMVIDRVMEIDEPTLNLDDLKWVILMVLFNAPGHESAYEQMEDLIFEQPDGRLHS</sequence>
<name>SMG_SHEHH</name>
<accession>B0TLD3</accession>